<protein>
    <recommendedName>
        <fullName evidence="1">2-C-methyl-D-erythritol 4-phosphate cytidylyltransferase</fullName>
        <ecNumber evidence="1">2.7.7.60</ecNumber>
    </recommendedName>
    <alternativeName>
        <fullName evidence="1">4-diphosphocytidyl-2C-methyl-D-erythritol synthase</fullName>
    </alternativeName>
    <alternativeName>
        <fullName evidence="1">MEP cytidylyltransferase</fullName>
        <shortName evidence="1">MCT</shortName>
    </alternativeName>
</protein>
<evidence type="ECO:0000255" key="1">
    <source>
        <dbReference type="HAMAP-Rule" id="MF_00108"/>
    </source>
</evidence>
<name>ISPD_CLOPE</name>
<dbReference type="EC" id="2.7.7.60" evidence="1"/>
<dbReference type="EMBL" id="BA000016">
    <property type="protein sequence ID" value="BAB82135.1"/>
    <property type="molecule type" value="Genomic_DNA"/>
</dbReference>
<dbReference type="RefSeq" id="WP_003459324.1">
    <property type="nucleotide sequence ID" value="NC_003366.1"/>
</dbReference>
<dbReference type="SMR" id="Q8XHQ3"/>
<dbReference type="STRING" id="195102.gene:10491747"/>
<dbReference type="GeneID" id="93000984"/>
<dbReference type="KEGG" id="cpe:CPE2429"/>
<dbReference type="HOGENOM" id="CLU_061281_2_2_9"/>
<dbReference type="UniPathway" id="UPA00056">
    <property type="reaction ID" value="UER00093"/>
</dbReference>
<dbReference type="Proteomes" id="UP000000818">
    <property type="component" value="Chromosome"/>
</dbReference>
<dbReference type="GO" id="GO:0050518">
    <property type="term" value="F:2-C-methyl-D-erythritol 4-phosphate cytidylyltransferase activity"/>
    <property type="evidence" value="ECO:0007669"/>
    <property type="project" value="UniProtKB-UniRule"/>
</dbReference>
<dbReference type="GO" id="GO:0019288">
    <property type="term" value="P:isopentenyl diphosphate biosynthetic process, methylerythritol 4-phosphate pathway"/>
    <property type="evidence" value="ECO:0007669"/>
    <property type="project" value="UniProtKB-UniRule"/>
</dbReference>
<dbReference type="CDD" id="cd02516">
    <property type="entry name" value="CDP-ME_synthetase"/>
    <property type="match status" value="1"/>
</dbReference>
<dbReference type="FunFam" id="3.90.550.10:FF:000003">
    <property type="entry name" value="2-C-methyl-D-erythritol 4-phosphate cytidylyltransferase"/>
    <property type="match status" value="1"/>
</dbReference>
<dbReference type="Gene3D" id="3.90.550.10">
    <property type="entry name" value="Spore Coat Polysaccharide Biosynthesis Protein SpsA, Chain A"/>
    <property type="match status" value="1"/>
</dbReference>
<dbReference type="HAMAP" id="MF_00108">
    <property type="entry name" value="IspD"/>
    <property type="match status" value="1"/>
</dbReference>
<dbReference type="InterPro" id="IPR001228">
    <property type="entry name" value="IspD"/>
</dbReference>
<dbReference type="InterPro" id="IPR034683">
    <property type="entry name" value="IspD/TarI"/>
</dbReference>
<dbReference type="InterPro" id="IPR050088">
    <property type="entry name" value="IspD/TarI_cytidylyltransf_bact"/>
</dbReference>
<dbReference type="InterPro" id="IPR018294">
    <property type="entry name" value="ISPD_synthase_CS"/>
</dbReference>
<dbReference type="InterPro" id="IPR029044">
    <property type="entry name" value="Nucleotide-diphossugar_trans"/>
</dbReference>
<dbReference type="NCBIfam" id="TIGR00453">
    <property type="entry name" value="ispD"/>
    <property type="match status" value="1"/>
</dbReference>
<dbReference type="NCBIfam" id="NF001183">
    <property type="entry name" value="PRK00155.1-3"/>
    <property type="match status" value="1"/>
</dbReference>
<dbReference type="PANTHER" id="PTHR32125">
    <property type="entry name" value="2-C-METHYL-D-ERYTHRITOL 4-PHOSPHATE CYTIDYLYLTRANSFERASE, CHLOROPLASTIC"/>
    <property type="match status" value="1"/>
</dbReference>
<dbReference type="PANTHER" id="PTHR32125:SF4">
    <property type="entry name" value="2-C-METHYL-D-ERYTHRITOL 4-PHOSPHATE CYTIDYLYLTRANSFERASE, CHLOROPLASTIC"/>
    <property type="match status" value="1"/>
</dbReference>
<dbReference type="Pfam" id="PF01128">
    <property type="entry name" value="IspD"/>
    <property type="match status" value="1"/>
</dbReference>
<dbReference type="SUPFAM" id="SSF53448">
    <property type="entry name" value="Nucleotide-diphospho-sugar transferases"/>
    <property type="match status" value="1"/>
</dbReference>
<dbReference type="PROSITE" id="PS01295">
    <property type="entry name" value="ISPD"/>
    <property type="match status" value="1"/>
</dbReference>
<proteinExistence type="inferred from homology"/>
<comment type="function">
    <text evidence="1">Catalyzes the formation of 4-diphosphocytidyl-2-C-methyl-D-erythritol from CTP and 2-C-methyl-D-erythritol 4-phosphate (MEP).</text>
</comment>
<comment type="catalytic activity">
    <reaction evidence="1">
        <text>2-C-methyl-D-erythritol 4-phosphate + CTP + H(+) = 4-CDP-2-C-methyl-D-erythritol + diphosphate</text>
        <dbReference type="Rhea" id="RHEA:13429"/>
        <dbReference type="ChEBI" id="CHEBI:15378"/>
        <dbReference type="ChEBI" id="CHEBI:33019"/>
        <dbReference type="ChEBI" id="CHEBI:37563"/>
        <dbReference type="ChEBI" id="CHEBI:57823"/>
        <dbReference type="ChEBI" id="CHEBI:58262"/>
        <dbReference type="EC" id="2.7.7.60"/>
    </reaction>
</comment>
<comment type="pathway">
    <text evidence="1">Isoprenoid biosynthesis; isopentenyl diphosphate biosynthesis via DXP pathway; isopentenyl diphosphate from 1-deoxy-D-xylulose 5-phosphate: step 2/6.</text>
</comment>
<comment type="similarity">
    <text evidence="1">Belongs to the IspD/TarI cytidylyltransferase family. IspD subfamily.</text>
</comment>
<keyword id="KW-0414">Isoprene biosynthesis</keyword>
<keyword id="KW-0548">Nucleotidyltransferase</keyword>
<keyword id="KW-1185">Reference proteome</keyword>
<keyword id="KW-0808">Transferase</keyword>
<sequence>MGKVVSVILAGGKGKRMGAEVSKQFIEINGKPIIYYTLKAFEECKGIDEIILVLPKDEIDYFKREIEPRFDFKISKIIEGGKERQDSVYNALNSIGDCDIVLIHDGARAFVSNKIIEDGIKYSREFGAAAPGVMPKDTIKVKNLEGFSVDTPNRASLVAVQTPQCFKYNLIKKGHNKVKNEKIQVTDDTMIVELLGEKVYLFEGDYKNIKVTTPEDLILAEHFVK</sequence>
<accession>Q8XHQ3</accession>
<gene>
    <name evidence="1" type="primary">ispD</name>
    <name type="ordered locus">CPE2429</name>
</gene>
<feature type="chain" id="PRO_0000075566" description="2-C-methyl-D-erythritol 4-phosphate cytidylyltransferase">
    <location>
        <begin position="1"/>
        <end position="225"/>
    </location>
</feature>
<feature type="site" description="Transition state stabilizer" evidence="1">
    <location>
        <position position="16"/>
    </location>
</feature>
<feature type="site" description="Transition state stabilizer" evidence="1">
    <location>
        <position position="23"/>
    </location>
</feature>
<feature type="site" description="Positions MEP for the nucleophilic attack" evidence="1">
    <location>
        <position position="154"/>
    </location>
</feature>
<feature type="site" description="Positions MEP for the nucleophilic attack" evidence="1">
    <location>
        <position position="210"/>
    </location>
</feature>
<organism>
    <name type="scientific">Clostridium perfringens (strain 13 / Type A)</name>
    <dbReference type="NCBI Taxonomy" id="195102"/>
    <lineage>
        <taxon>Bacteria</taxon>
        <taxon>Bacillati</taxon>
        <taxon>Bacillota</taxon>
        <taxon>Clostridia</taxon>
        <taxon>Eubacteriales</taxon>
        <taxon>Clostridiaceae</taxon>
        <taxon>Clostridium</taxon>
    </lineage>
</organism>
<reference key="1">
    <citation type="journal article" date="2002" name="Proc. Natl. Acad. Sci. U.S.A.">
        <title>Complete genome sequence of Clostridium perfringens, an anaerobic flesh-eater.</title>
        <authorList>
            <person name="Shimizu T."/>
            <person name="Ohtani K."/>
            <person name="Hirakawa H."/>
            <person name="Ohshima K."/>
            <person name="Yamashita A."/>
            <person name="Shiba T."/>
            <person name="Ogasawara N."/>
            <person name="Hattori M."/>
            <person name="Kuhara S."/>
            <person name="Hayashi H."/>
        </authorList>
    </citation>
    <scope>NUCLEOTIDE SEQUENCE [LARGE SCALE GENOMIC DNA]</scope>
    <source>
        <strain>13 / Type A</strain>
    </source>
</reference>